<protein>
    <recommendedName>
        <fullName evidence="1">Probable endonuclease 4</fullName>
        <ecNumber evidence="1">3.1.21.2</ecNumber>
    </recommendedName>
    <alternativeName>
        <fullName evidence="1">Endodeoxyribonuclease IV</fullName>
    </alternativeName>
    <alternativeName>
        <fullName evidence="1">Endonuclease IV</fullName>
    </alternativeName>
</protein>
<proteinExistence type="inferred from homology"/>
<sequence length="285" mass="31491">MKYIGAHVSAAGGLANAAIRAAEIDATAFALFTKNQRQWRAAPLTTQTIDEFKAACEKYHYTSAQILPHDSYLINLGHPVTEALEKSRDAFIDEMQRCEQLGLSLLNFHPGSHLMQISEEDCLARIAESINIALDKTQGVTAVIENTAGQGSNLGFKFEHLAAIIDGVEDKSRVGVCIDTCHAFAAGYDLRTPAECEKTFADFARIVGFKYLRGMHLNDAKSTFGSRVDRHHSLGEGNIGHDAFRWIMQNDRFDGIPLILETINPDIWAEEIAWLKAQQTEKAVA</sequence>
<dbReference type="EC" id="3.1.21.2" evidence="1"/>
<dbReference type="EMBL" id="CP000266">
    <property type="protein sequence ID" value="ABF04350.1"/>
    <property type="molecule type" value="Genomic_DNA"/>
</dbReference>
<dbReference type="RefSeq" id="WP_000873892.1">
    <property type="nucleotide sequence ID" value="NC_008258.1"/>
</dbReference>
<dbReference type="SMR" id="Q0T2W5"/>
<dbReference type="KEGG" id="sfv:SFV_2234"/>
<dbReference type="HOGENOM" id="CLU_025885_0_4_6"/>
<dbReference type="Proteomes" id="UP000000659">
    <property type="component" value="Chromosome"/>
</dbReference>
<dbReference type="GO" id="GO:0008833">
    <property type="term" value="F:deoxyribonuclease IV (phage-T4-induced) activity"/>
    <property type="evidence" value="ECO:0007669"/>
    <property type="project" value="UniProtKB-UniRule"/>
</dbReference>
<dbReference type="GO" id="GO:0003677">
    <property type="term" value="F:DNA binding"/>
    <property type="evidence" value="ECO:0007669"/>
    <property type="project" value="InterPro"/>
</dbReference>
<dbReference type="GO" id="GO:0003906">
    <property type="term" value="F:DNA-(apurinic or apyrimidinic site) endonuclease activity"/>
    <property type="evidence" value="ECO:0007669"/>
    <property type="project" value="TreeGrafter"/>
</dbReference>
<dbReference type="GO" id="GO:0008081">
    <property type="term" value="F:phosphoric diester hydrolase activity"/>
    <property type="evidence" value="ECO:0007669"/>
    <property type="project" value="TreeGrafter"/>
</dbReference>
<dbReference type="GO" id="GO:0008270">
    <property type="term" value="F:zinc ion binding"/>
    <property type="evidence" value="ECO:0007669"/>
    <property type="project" value="UniProtKB-UniRule"/>
</dbReference>
<dbReference type="GO" id="GO:0006284">
    <property type="term" value="P:base-excision repair"/>
    <property type="evidence" value="ECO:0007669"/>
    <property type="project" value="TreeGrafter"/>
</dbReference>
<dbReference type="CDD" id="cd00019">
    <property type="entry name" value="AP2Ec"/>
    <property type="match status" value="1"/>
</dbReference>
<dbReference type="FunFam" id="3.20.20.150:FF:000001">
    <property type="entry name" value="Probable endonuclease 4"/>
    <property type="match status" value="1"/>
</dbReference>
<dbReference type="Gene3D" id="3.20.20.150">
    <property type="entry name" value="Divalent-metal-dependent TIM barrel enzymes"/>
    <property type="match status" value="1"/>
</dbReference>
<dbReference type="HAMAP" id="MF_00152">
    <property type="entry name" value="Nfo"/>
    <property type="match status" value="1"/>
</dbReference>
<dbReference type="InterPro" id="IPR001719">
    <property type="entry name" value="AP_endonuc_2"/>
</dbReference>
<dbReference type="InterPro" id="IPR018246">
    <property type="entry name" value="AP_endonuc_F2_Zn_BS"/>
</dbReference>
<dbReference type="InterPro" id="IPR036237">
    <property type="entry name" value="Xyl_isomerase-like_sf"/>
</dbReference>
<dbReference type="InterPro" id="IPR013022">
    <property type="entry name" value="Xyl_isomerase-like_TIM-brl"/>
</dbReference>
<dbReference type="NCBIfam" id="TIGR00587">
    <property type="entry name" value="nfo"/>
    <property type="match status" value="1"/>
</dbReference>
<dbReference type="NCBIfam" id="NF002199">
    <property type="entry name" value="PRK01060.1-4"/>
    <property type="match status" value="1"/>
</dbReference>
<dbReference type="PANTHER" id="PTHR21445:SF0">
    <property type="entry name" value="APURINIC-APYRIMIDINIC ENDONUCLEASE"/>
    <property type="match status" value="1"/>
</dbReference>
<dbReference type="PANTHER" id="PTHR21445">
    <property type="entry name" value="ENDONUCLEASE IV ENDODEOXYRIBONUCLEASE IV"/>
    <property type="match status" value="1"/>
</dbReference>
<dbReference type="Pfam" id="PF01261">
    <property type="entry name" value="AP_endonuc_2"/>
    <property type="match status" value="1"/>
</dbReference>
<dbReference type="SMART" id="SM00518">
    <property type="entry name" value="AP2Ec"/>
    <property type="match status" value="1"/>
</dbReference>
<dbReference type="SUPFAM" id="SSF51658">
    <property type="entry name" value="Xylose isomerase-like"/>
    <property type="match status" value="1"/>
</dbReference>
<dbReference type="PROSITE" id="PS00729">
    <property type="entry name" value="AP_NUCLEASE_F2_1"/>
    <property type="match status" value="1"/>
</dbReference>
<dbReference type="PROSITE" id="PS00730">
    <property type="entry name" value="AP_NUCLEASE_F2_2"/>
    <property type="match status" value="1"/>
</dbReference>
<dbReference type="PROSITE" id="PS00731">
    <property type="entry name" value="AP_NUCLEASE_F2_3"/>
    <property type="match status" value="1"/>
</dbReference>
<dbReference type="PROSITE" id="PS51432">
    <property type="entry name" value="AP_NUCLEASE_F2_4"/>
    <property type="match status" value="1"/>
</dbReference>
<gene>
    <name evidence="1" type="primary">nfo</name>
    <name type="ordered locus">SFV_2234</name>
</gene>
<feature type="chain" id="PRO_1000011334" description="Probable endonuclease 4">
    <location>
        <begin position="1"/>
        <end position="285"/>
    </location>
</feature>
<feature type="binding site" evidence="1">
    <location>
        <position position="69"/>
    </location>
    <ligand>
        <name>Zn(2+)</name>
        <dbReference type="ChEBI" id="CHEBI:29105"/>
        <label>1</label>
    </ligand>
</feature>
<feature type="binding site" evidence="1">
    <location>
        <position position="109"/>
    </location>
    <ligand>
        <name>Zn(2+)</name>
        <dbReference type="ChEBI" id="CHEBI:29105"/>
        <label>1</label>
    </ligand>
</feature>
<feature type="binding site" evidence="1">
    <location>
        <position position="145"/>
    </location>
    <ligand>
        <name>Zn(2+)</name>
        <dbReference type="ChEBI" id="CHEBI:29105"/>
        <label>1</label>
    </ligand>
</feature>
<feature type="binding site" evidence="1">
    <location>
        <position position="145"/>
    </location>
    <ligand>
        <name>Zn(2+)</name>
        <dbReference type="ChEBI" id="CHEBI:29105"/>
        <label>2</label>
    </ligand>
</feature>
<feature type="binding site" evidence="1">
    <location>
        <position position="179"/>
    </location>
    <ligand>
        <name>Zn(2+)</name>
        <dbReference type="ChEBI" id="CHEBI:29105"/>
        <label>2</label>
    </ligand>
</feature>
<feature type="binding site" evidence="1">
    <location>
        <position position="182"/>
    </location>
    <ligand>
        <name>Zn(2+)</name>
        <dbReference type="ChEBI" id="CHEBI:29105"/>
        <label>3</label>
    </ligand>
</feature>
<feature type="binding site" evidence="1">
    <location>
        <position position="216"/>
    </location>
    <ligand>
        <name>Zn(2+)</name>
        <dbReference type="ChEBI" id="CHEBI:29105"/>
        <label>2</label>
    </ligand>
</feature>
<feature type="binding site" evidence="1">
    <location>
        <position position="229"/>
    </location>
    <ligand>
        <name>Zn(2+)</name>
        <dbReference type="ChEBI" id="CHEBI:29105"/>
        <label>3</label>
    </ligand>
</feature>
<feature type="binding site" evidence="1">
    <location>
        <position position="231"/>
    </location>
    <ligand>
        <name>Zn(2+)</name>
        <dbReference type="ChEBI" id="CHEBI:29105"/>
        <label>3</label>
    </ligand>
</feature>
<feature type="binding site" evidence="1">
    <location>
        <position position="261"/>
    </location>
    <ligand>
        <name>Zn(2+)</name>
        <dbReference type="ChEBI" id="CHEBI:29105"/>
        <label>2</label>
    </ligand>
</feature>
<organism>
    <name type="scientific">Shigella flexneri serotype 5b (strain 8401)</name>
    <dbReference type="NCBI Taxonomy" id="373384"/>
    <lineage>
        <taxon>Bacteria</taxon>
        <taxon>Pseudomonadati</taxon>
        <taxon>Pseudomonadota</taxon>
        <taxon>Gammaproteobacteria</taxon>
        <taxon>Enterobacterales</taxon>
        <taxon>Enterobacteriaceae</taxon>
        <taxon>Shigella</taxon>
    </lineage>
</organism>
<name>END4_SHIF8</name>
<evidence type="ECO:0000255" key="1">
    <source>
        <dbReference type="HAMAP-Rule" id="MF_00152"/>
    </source>
</evidence>
<keyword id="KW-0227">DNA damage</keyword>
<keyword id="KW-0234">DNA repair</keyword>
<keyword id="KW-0255">Endonuclease</keyword>
<keyword id="KW-0378">Hydrolase</keyword>
<keyword id="KW-0479">Metal-binding</keyword>
<keyword id="KW-0540">Nuclease</keyword>
<keyword id="KW-0862">Zinc</keyword>
<reference key="1">
    <citation type="journal article" date="2006" name="BMC Genomics">
        <title>Complete genome sequence of Shigella flexneri 5b and comparison with Shigella flexneri 2a.</title>
        <authorList>
            <person name="Nie H."/>
            <person name="Yang F."/>
            <person name="Zhang X."/>
            <person name="Yang J."/>
            <person name="Chen L."/>
            <person name="Wang J."/>
            <person name="Xiong Z."/>
            <person name="Peng J."/>
            <person name="Sun L."/>
            <person name="Dong J."/>
            <person name="Xue Y."/>
            <person name="Xu X."/>
            <person name="Chen S."/>
            <person name="Yao Z."/>
            <person name="Shen Y."/>
            <person name="Jin Q."/>
        </authorList>
    </citation>
    <scope>NUCLEOTIDE SEQUENCE [LARGE SCALE GENOMIC DNA]</scope>
    <source>
        <strain>8401</strain>
    </source>
</reference>
<accession>Q0T2W5</accession>
<comment type="function">
    <text evidence="1">Endonuclease IV plays a role in DNA repair. It cleaves phosphodiester bonds at apurinic or apyrimidinic (AP) sites, generating a 3'-hydroxyl group and a 5'-terminal sugar phosphate.</text>
</comment>
<comment type="catalytic activity">
    <reaction evidence="1">
        <text>Endonucleolytic cleavage to 5'-phosphooligonucleotide end-products.</text>
        <dbReference type="EC" id="3.1.21.2"/>
    </reaction>
</comment>
<comment type="cofactor">
    <cofactor evidence="1">
        <name>Zn(2+)</name>
        <dbReference type="ChEBI" id="CHEBI:29105"/>
    </cofactor>
    <text evidence="1">Binds 3 Zn(2+) ions.</text>
</comment>
<comment type="similarity">
    <text evidence="1">Belongs to the AP endonuclease 2 family.</text>
</comment>